<sequence length="159" mass="18306">MKITILAVGKLKEKYWKQAIAEYEKRLGPYTKIDIIEVPDEKAPENMSDKEIEQVKEKEGQRILAKIKPQSTVITLEIQGKMLSSEGLAQELNQRMTQGQSDFVFVIGGSNGLHKDVLQRSNYALSFSKMTFPHQMMRVVLIEQVYRAFKIMRGEAYHK</sequence>
<gene>
    <name evidence="1" type="primary">rlmH</name>
    <name type="ordered locus">SACOL0025.1</name>
</gene>
<protein>
    <recommendedName>
        <fullName evidence="1">Ribosomal RNA large subunit methyltransferase H</fullName>
        <ecNumber evidence="1">2.1.1.177</ecNumber>
    </recommendedName>
    <alternativeName>
        <fullName evidence="1">23S rRNA (pseudouridine1915-N3)-methyltransferase</fullName>
    </alternativeName>
    <alternativeName>
        <fullName evidence="1">23S rRNA m3Psi1915 methyltransferase</fullName>
    </alternativeName>
    <alternativeName>
        <fullName evidence="1">rRNA (pseudouridine-N3-)-methyltransferase RlmH</fullName>
    </alternativeName>
</protein>
<name>RLMH_STAAC</name>
<reference key="1">
    <citation type="journal article" date="2005" name="J. Bacteriol.">
        <title>Insights on evolution of virulence and resistance from the complete genome analysis of an early methicillin-resistant Staphylococcus aureus strain and a biofilm-producing methicillin-resistant Staphylococcus epidermidis strain.</title>
        <authorList>
            <person name="Gill S.R."/>
            <person name="Fouts D.E."/>
            <person name="Archer G.L."/>
            <person name="Mongodin E.F."/>
            <person name="DeBoy R.T."/>
            <person name="Ravel J."/>
            <person name="Paulsen I.T."/>
            <person name="Kolonay J.F."/>
            <person name="Brinkac L.M."/>
            <person name="Beanan M.J."/>
            <person name="Dodson R.J."/>
            <person name="Daugherty S.C."/>
            <person name="Madupu R."/>
            <person name="Angiuoli S.V."/>
            <person name="Durkin A.S."/>
            <person name="Haft D.H."/>
            <person name="Vamathevan J.J."/>
            <person name="Khouri H."/>
            <person name="Utterback T.R."/>
            <person name="Lee C."/>
            <person name="Dimitrov G."/>
            <person name="Jiang L."/>
            <person name="Qin H."/>
            <person name="Weidman J."/>
            <person name="Tran K."/>
            <person name="Kang K.H."/>
            <person name="Hance I.R."/>
            <person name="Nelson K.E."/>
            <person name="Fraser C.M."/>
        </authorList>
    </citation>
    <scope>NUCLEOTIDE SEQUENCE [LARGE SCALE GENOMIC DNA]</scope>
    <source>
        <strain>COL</strain>
    </source>
</reference>
<reference key="2">
    <citation type="unpublished observations" date="2008-07">
        <authorList>
            <person name="Ossandon F.J."/>
            <person name="Rivera G."/>
            <person name="Holmes D.S."/>
        </authorList>
    </citation>
    <scope>IDENTIFICATION</scope>
</reference>
<feature type="chain" id="PRO_0000372302" description="Ribosomal RNA large subunit methyltransferase H">
    <location>
        <begin position="1"/>
        <end position="159"/>
    </location>
</feature>
<feature type="binding site" evidence="1">
    <location>
        <position position="76"/>
    </location>
    <ligand>
        <name>S-adenosyl-L-methionine</name>
        <dbReference type="ChEBI" id="CHEBI:59789"/>
    </ligand>
</feature>
<feature type="binding site" evidence="1">
    <location>
        <position position="108"/>
    </location>
    <ligand>
        <name>S-adenosyl-L-methionine</name>
        <dbReference type="ChEBI" id="CHEBI:59789"/>
    </ligand>
</feature>
<feature type="binding site" evidence="1">
    <location>
        <begin position="127"/>
        <end position="132"/>
    </location>
    <ligand>
        <name>S-adenosyl-L-methionine</name>
        <dbReference type="ChEBI" id="CHEBI:59789"/>
    </ligand>
</feature>
<proteinExistence type="inferred from homology"/>
<accession>P0C949</accession>
<dbReference type="EC" id="2.1.1.177" evidence="1"/>
<dbReference type="EMBL" id="CP000046">
    <property type="status" value="NOT_ANNOTATED_CDS"/>
    <property type="molecule type" value="Genomic_DNA"/>
</dbReference>
<dbReference type="RefSeq" id="WP_000704775.1">
    <property type="nucleotide sequence ID" value="NZ_JBGOFO010000001.1"/>
</dbReference>
<dbReference type="SMR" id="P0C949"/>
<dbReference type="GeneID" id="98344407"/>
<dbReference type="Proteomes" id="UP000000530">
    <property type="component" value="Chromosome"/>
</dbReference>
<dbReference type="GO" id="GO:0005737">
    <property type="term" value="C:cytoplasm"/>
    <property type="evidence" value="ECO:0007669"/>
    <property type="project" value="UniProtKB-SubCell"/>
</dbReference>
<dbReference type="GO" id="GO:0070038">
    <property type="term" value="F:rRNA (pseudouridine-N3-)-methyltransferase activity"/>
    <property type="evidence" value="ECO:0007669"/>
    <property type="project" value="UniProtKB-UniRule"/>
</dbReference>
<dbReference type="CDD" id="cd18081">
    <property type="entry name" value="RlmH-like"/>
    <property type="match status" value="1"/>
</dbReference>
<dbReference type="Gene3D" id="3.40.1280.10">
    <property type="match status" value="1"/>
</dbReference>
<dbReference type="HAMAP" id="MF_00658">
    <property type="entry name" value="23SrRNA_methyltr_H"/>
    <property type="match status" value="1"/>
</dbReference>
<dbReference type="InterPro" id="IPR029028">
    <property type="entry name" value="Alpha/beta_knot_MTases"/>
</dbReference>
<dbReference type="InterPro" id="IPR003742">
    <property type="entry name" value="RlmH-like"/>
</dbReference>
<dbReference type="InterPro" id="IPR029026">
    <property type="entry name" value="tRNA_m1G_MTases_N"/>
</dbReference>
<dbReference type="NCBIfam" id="NF000985">
    <property type="entry name" value="PRK00103.1-3"/>
    <property type="match status" value="1"/>
</dbReference>
<dbReference type="NCBIfam" id="NF000986">
    <property type="entry name" value="PRK00103.1-4"/>
    <property type="match status" value="1"/>
</dbReference>
<dbReference type="NCBIfam" id="TIGR00246">
    <property type="entry name" value="tRNA_RlmH_YbeA"/>
    <property type="match status" value="1"/>
</dbReference>
<dbReference type="PANTHER" id="PTHR33603">
    <property type="entry name" value="METHYLTRANSFERASE"/>
    <property type="match status" value="1"/>
</dbReference>
<dbReference type="PANTHER" id="PTHR33603:SF1">
    <property type="entry name" value="RIBOSOMAL RNA LARGE SUBUNIT METHYLTRANSFERASE H"/>
    <property type="match status" value="1"/>
</dbReference>
<dbReference type="Pfam" id="PF02590">
    <property type="entry name" value="SPOUT_MTase"/>
    <property type="match status" value="1"/>
</dbReference>
<dbReference type="PIRSF" id="PIRSF004505">
    <property type="entry name" value="MT_bac"/>
    <property type="match status" value="1"/>
</dbReference>
<dbReference type="SUPFAM" id="SSF75217">
    <property type="entry name" value="alpha/beta knot"/>
    <property type="match status" value="1"/>
</dbReference>
<organism>
    <name type="scientific">Staphylococcus aureus (strain COL)</name>
    <dbReference type="NCBI Taxonomy" id="93062"/>
    <lineage>
        <taxon>Bacteria</taxon>
        <taxon>Bacillati</taxon>
        <taxon>Bacillota</taxon>
        <taxon>Bacilli</taxon>
        <taxon>Bacillales</taxon>
        <taxon>Staphylococcaceae</taxon>
        <taxon>Staphylococcus</taxon>
    </lineage>
</organism>
<evidence type="ECO:0000255" key="1">
    <source>
        <dbReference type="HAMAP-Rule" id="MF_00658"/>
    </source>
</evidence>
<evidence type="ECO:0000305" key="2"/>
<comment type="function">
    <text evidence="1">Specifically methylates the pseudouridine at position 1915 (m3Psi1915) in 23S rRNA.</text>
</comment>
<comment type="catalytic activity">
    <reaction evidence="1">
        <text>pseudouridine(1915) in 23S rRNA + S-adenosyl-L-methionine = N(3)-methylpseudouridine(1915) in 23S rRNA + S-adenosyl-L-homocysteine + H(+)</text>
        <dbReference type="Rhea" id="RHEA:42752"/>
        <dbReference type="Rhea" id="RHEA-COMP:10221"/>
        <dbReference type="Rhea" id="RHEA-COMP:10222"/>
        <dbReference type="ChEBI" id="CHEBI:15378"/>
        <dbReference type="ChEBI" id="CHEBI:57856"/>
        <dbReference type="ChEBI" id="CHEBI:59789"/>
        <dbReference type="ChEBI" id="CHEBI:65314"/>
        <dbReference type="ChEBI" id="CHEBI:74486"/>
        <dbReference type="EC" id="2.1.1.177"/>
    </reaction>
</comment>
<comment type="subunit">
    <text evidence="1">Homodimer.</text>
</comment>
<comment type="subcellular location">
    <subcellularLocation>
        <location evidence="1 2">Cytoplasm</location>
    </subcellularLocation>
</comment>
<comment type="similarity">
    <text evidence="1 2">Belongs to the RNA methyltransferase RlmH family.</text>
</comment>
<keyword id="KW-0963">Cytoplasm</keyword>
<keyword id="KW-0489">Methyltransferase</keyword>
<keyword id="KW-0698">rRNA processing</keyword>
<keyword id="KW-0949">S-adenosyl-L-methionine</keyword>
<keyword id="KW-0808">Transferase</keyword>